<organism>
    <name type="scientific">Campylobacter concisus (strain 13826)</name>
    <dbReference type="NCBI Taxonomy" id="360104"/>
    <lineage>
        <taxon>Bacteria</taxon>
        <taxon>Pseudomonadati</taxon>
        <taxon>Campylobacterota</taxon>
        <taxon>Epsilonproteobacteria</taxon>
        <taxon>Campylobacterales</taxon>
        <taxon>Campylobacteraceae</taxon>
        <taxon>Campylobacter</taxon>
    </lineage>
</organism>
<keyword id="KW-0378">Hydrolase</keyword>
<keyword id="KW-0511">Multifunctional enzyme</keyword>
<keyword id="KW-0658">Purine biosynthesis</keyword>
<keyword id="KW-0808">Transferase</keyword>
<sequence length="510" mass="56510">MRALLSVSDKEGIVEFAKGLEELDWQILSTGGTYKLLKAEGVKATEVSEFTASPEMFEGRVKTLHPKVHGGILHKRDDATHVAQAKEHGIEGIDLVCVNLYPFKETTIRTDDFAEIIENIDIGGPAMVRSAAKNFKDVLIVTSVLDYDEILKRLKEKSDDYEFRRSLMIKAFEHTAAYDSMIANYMNDRFNGGFGDARFIVGSKVFDTRYGENPHQKGALYEFDYFFTNNFRALKGEASFNNMTDINGALMLATSFDDAPAVAIIKHANPCGFAVKDTLLESYVAALKCDPISAYGGVVAINGTLDEELAKKINEIYVEVIIAANVDDAALKVFESKKRIKIFTQDNKFLVRANDKFDFKHIDGGFVFQERDFVKDEELENMKQMSKKFATGSELKDAQIAWKVAALTKSNCVVYVKDGAMVAIGMGMTSRVDAARAAVAKAKELKIDLSGCVLASEAFFPFRDSIDIASKVGVKCVIEPGGSIRDDEVIEAADEHGMSLYFTGVRHFLH</sequence>
<name>PUR9_CAMC1</name>
<gene>
    <name evidence="1" type="primary">purH</name>
    <name type="ordered locus">Ccon26_07810</name>
    <name type="ORF">CCC13826_1632</name>
</gene>
<dbReference type="EC" id="2.1.2.3" evidence="1"/>
<dbReference type="EC" id="3.5.4.10" evidence="1"/>
<dbReference type="EMBL" id="CP000792">
    <property type="protein sequence ID" value="EAT97421.1"/>
    <property type="molecule type" value="Genomic_DNA"/>
</dbReference>
<dbReference type="RefSeq" id="WP_012001606.1">
    <property type="nucleotide sequence ID" value="NC_009802.2"/>
</dbReference>
<dbReference type="SMR" id="A7ZCZ7"/>
<dbReference type="STRING" id="360104.CCC13826_1632"/>
<dbReference type="KEGG" id="cco:CCC13826_1632"/>
<dbReference type="eggNOG" id="COG0138">
    <property type="taxonomic scope" value="Bacteria"/>
</dbReference>
<dbReference type="HOGENOM" id="CLU_016316_5_2_7"/>
<dbReference type="OrthoDB" id="9802065at2"/>
<dbReference type="UniPathway" id="UPA00074">
    <property type="reaction ID" value="UER00133"/>
</dbReference>
<dbReference type="UniPathway" id="UPA00074">
    <property type="reaction ID" value="UER00135"/>
</dbReference>
<dbReference type="Proteomes" id="UP000001121">
    <property type="component" value="Chromosome"/>
</dbReference>
<dbReference type="GO" id="GO:0005829">
    <property type="term" value="C:cytosol"/>
    <property type="evidence" value="ECO:0007669"/>
    <property type="project" value="TreeGrafter"/>
</dbReference>
<dbReference type="GO" id="GO:0003937">
    <property type="term" value="F:IMP cyclohydrolase activity"/>
    <property type="evidence" value="ECO:0007669"/>
    <property type="project" value="UniProtKB-UniRule"/>
</dbReference>
<dbReference type="GO" id="GO:0004643">
    <property type="term" value="F:phosphoribosylaminoimidazolecarboxamide formyltransferase activity"/>
    <property type="evidence" value="ECO:0007669"/>
    <property type="project" value="UniProtKB-UniRule"/>
</dbReference>
<dbReference type="GO" id="GO:0006189">
    <property type="term" value="P:'de novo' IMP biosynthetic process"/>
    <property type="evidence" value="ECO:0007669"/>
    <property type="project" value="UniProtKB-UniRule"/>
</dbReference>
<dbReference type="CDD" id="cd01421">
    <property type="entry name" value="IMPCH"/>
    <property type="match status" value="1"/>
</dbReference>
<dbReference type="FunFam" id="3.40.140.20:FF:000001">
    <property type="entry name" value="Bifunctional purine biosynthesis protein PurH"/>
    <property type="match status" value="1"/>
</dbReference>
<dbReference type="FunFam" id="3.40.50.1380:FF:000001">
    <property type="entry name" value="Bifunctional purine biosynthesis protein PurH"/>
    <property type="match status" value="1"/>
</dbReference>
<dbReference type="Gene3D" id="3.40.140.20">
    <property type="match status" value="2"/>
</dbReference>
<dbReference type="Gene3D" id="3.40.50.1380">
    <property type="entry name" value="Methylglyoxal synthase-like domain"/>
    <property type="match status" value="1"/>
</dbReference>
<dbReference type="HAMAP" id="MF_00139">
    <property type="entry name" value="PurH"/>
    <property type="match status" value="1"/>
</dbReference>
<dbReference type="InterPro" id="IPR024051">
    <property type="entry name" value="AICAR_Tfase_dup_dom_sf"/>
</dbReference>
<dbReference type="InterPro" id="IPR016193">
    <property type="entry name" value="Cytidine_deaminase-like"/>
</dbReference>
<dbReference type="InterPro" id="IPR011607">
    <property type="entry name" value="MGS-like_dom"/>
</dbReference>
<dbReference type="InterPro" id="IPR036914">
    <property type="entry name" value="MGS-like_dom_sf"/>
</dbReference>
<dbReference type="InterPro" id="IPR002695">
    <property type="entry name" value="PurH-like"/>
</dbReference>
<dbReference type="NCBIfam" id="NF002049">
    <property type="entry name" value="PRK00881.1"/>
    <property type="match status" value="1"/>
</dbReference>
<dbReference type="NCBIfam" id="TIGR00355">
    <property type="entry name" value="purH"/>
    <property type="match status" value="1"/>
</dbReference>
<dbReference type="PANTHER" id="PTHR11692:SF0">
    <property type="entry name" value="BIFUNCTIONAL PURINE BIOSYNTHESIS PROTEIN ATIC"/>
    <property type="match status" value="1"/>
</dbReference>
<dbReference type="PANTHER" id="PTHR11692">
    <property type="entry name" value="BIFUNCTIONAL PURINE BIOSYNTHESIS PROTEIN PURH"/>
    <property type="match status" value="1"/>
</dbReference>
<dbReference type="Pfam" id="PF01808">
    <property type="entry name" value="AICARFT_IMPCHas"/>
    <property type="match status" value="1"/>
</dbReference>
<dbReference type="Pfam" id="PF02142">
    <property type="entry name" value="MGS"/>
    <property type="match status" value="1"/>
</dbReference>
<dbReference type="PIRSF" id="PIRSF000414">
    <property type="entry name" value="AICARFT_IMPCHas"/>
    <property type="match status" value="1"/>
</dbReference>
<dbReference type="SMART" id="SM00798">
    <property type="entry name" value="AICARFT_IMPCHas"/>
    <property type="match status" value="1"/>
</dbReference>
<dbReference type="SMART" id="SM00851">
    <property type="entry name" value="MGS"/>
    <property type="match status" value="1"/>
</dbReference>
<dbReference type="SUPFAM" id="SSF53927">
    <property type="entry name" value="Cytidine deaminase-like"/>
    <property type="match status" value="1"/>
</dbReference>
<dbReference type="SUPFAM" id="SSF52335">
    <property type="entry name" value="Methylglyoxal synthase-like"/>
    <property type="match status" value="1"/>
</dbReference>
<dbReference type="PROSITE" id="PS51855">
    <property type="entry name" value="MGS"/>
    <property type="match status" value="1"/>
</dbReference>
<reference key="1">
    <citation type="submission" date="2007-10" db="EMBL/GenBank/DDBJ databases">
        <title>Genome sequence of Campylobacter concisus 13826 isolated from human feces.</title>
        <authorList>
            <person name="Fouts D.E."/>
            <person name="Mongodin E.F."/>
            <person name="Puiu D."/>
            <person name="Sebastian Y."/>
            <person name="Miller W.G."/>
            <person name="Mandrell R.E."/>
            <person name="On S."/>
            <person name="Nelson K.E."/>
        </authorList>
    </citation>
    <scope>NUCLEOTIDE SEQUENCE [LARGE SCALE GENOMIC DNA]</scope>
    <source>
        <strain>13826</strain>
    </source>
</reference>
<accession>A7ZCZ7</accession>
<evidence type="ECO:0000255" key="1">
    <source>
        <dbReference type="HAMAP-Rule" id="MF_00139"/>
    </source>
</evidence>
<evidence type="ECO:0000255" key="2">
    <source>
        <dbReference type="PROSITE-ProRule" id="PRU01202"/>
    </source>
</evidence>
<protein>
    <recommendedName>
        <fullName evidence="1">Bifunctional purine biosynthesis protein PurH</fullName>
    </recommendedName>
    <domain>
        <recommendedName>
            <fullName evidence="1">Phosphoribosylaminoimidazolecarboxamide formyltransferase</fullName>
            <ecNumber evidence="1">2.1.2.3</ecNumber>
        </recommendedName>
        <alternativeName>
            <fullName evidence="1">AICAR transformylase</fullName>
        </alternativeName>
    </domain>
    <domain>
        <recommendedName>
            <fullName evidence="1">IMP cyclohydrolase</fullName>
            <ecNumber evidence="1">3.5.4.10</ecNumber>
        </recommendedName>
        <alternativeName>
            <fullName evidence="1">ATIC</fullName>
        </alternativeName>
        <alternativeName>
            <fullName evidence="1">IMP synthase</fullName>
        </alternativeName>
        <alternativeName>
            <fullName evidence="1">Inosinicase</fullName>
        </alternativeName>
    </domain>
</protein>
<comment type="catalytic activity">
    <reaction evidence="1">
        <text>(6R)-10-formyltetrahydrofolate + 5-amino-1-(5-phospho-beta-D-ribosyl)imidazole-4-carboxamide = 5-formamido-1-(5-phospho-D-ribosyl)imidazole-4-carboxamide + (6S)-5,6,7,8-tetrahydrofolate</text>
        <dbReference type="Rhea" id="RHEA:22192"/>
        <dbReference type="ChEBI" id="CHEBI:57453"/>
        <dbReference type="ChEBI" id="CHEBI:58467"/>
        <dbReference type="ChEBI" id="CHEBI:58475"/>
        <dbReference type="ChEBI" id="CHEBI:195366"/>
        <dbReference type="EC" id="2.1.2.3"/>
    </reaction>
</comment>
<comment type="catalytic activity">
    <reaction evidence="1">
        <text>IMP + H2O = 5-formamido-1-(5-phospho-D-ribosyl)imidazole-4-carboxamide</text>
        <dbReference type="Rhea" id="RHEA:18445"/>
        <dbReference type="ChEBI" id="CHEBI:15377"/>
        <dbReference type="ChEBI" id="CHEBI:58053"/>
        <dbReference type="ChEBI" id="CHEBI:58467"/>
        <dbReference type="EC" id="3.5.4.10"/>
    </reaction>
</comment>
<comment type="pathway">
    <text evidence="1">Purine metabolism; IMP biosynthesis via de novo pathway; 5-formamido-1-(5-phospho-D-ribosyl)imidazole-4-carboxamide from 5-amino-1-(5-phospho-D-ribosyl)imidazole-4-carboxamide (10-formyl THF route): step 1/1.</text>
</comment>
<comment type="pathway">
    <text evidence="1">Purine metabolism; IMP biosynthesis via de novo pathway; IMP from 5-formamido-1-(5-phospho-D-ribosyl)imidazole-4-carboxamide: step 1/1.</text>
</comment>
<comment type="domain">
    <text evidence="1">The IMP cyclohydrolase activity resides in the N-terminal region.</text>
</comment>
<comment type="similarity">
    <text evidence="1">Belongs to the PurH family.</text>
</comment>
<feature type="chain" id="PRO_1000018867" description="Bifunctional purine biosynthesis protein PurH">
    <location>
        <begin position="1"/>
        <end position="510"/>
    </location>
</feature>
<feature type="domain" description="MGS-like" evidence="2">
    <location>
        <begin position="1"/>
        <end position="142"/>
    </location>
</feature>
<proteinExistence type="inferred from homology"/>